<sequence>MTKLVSKIFKRLISQSQYMSSSTTSNLPAASQTSNLESQLLSSAPPPAKKKRGSALLWYLVGFTTYGLGETYKFLQTQVEHLDSRKQCLEMKPMKLNTTKDLDGLGFRRVVCKGIFDEQRSIYVGPKPRSMSKSSEIGFYVITPLLPIPNEPNSMKSPILVNRGWVPSDWKENSLESLGTGGLVAAAKESRKANKLLSSQQSLLSKFWYKLNNPMIVEDQVSRAMHVEVVGVVRKSETPGIYTLVNYPSSLAWFYLDVPKLALAMGFGEDTMYIESTYTDMDESRTYPVPRDVENLTRSKDIPLDYHLYTVLWHWSSLTCFIKASSILMRRLTKSDPIGVEPILIPISILVFICTKIYSLRNLFCKIDTIGVGCVTKLDTGKVK</sequence>
<name>SURFL_ARATH</name>
<dbReference type="EMBL" id="AC020889">
    <property type="protein sequence ID" value="AAF79698.1"/>
    <property type="status" value="ALT_SEQ"/>
    <property type="molecule type" value="Genomic_DNA"/>
</dbReference>
<dbReference type="EMBL" id="CP002684">
    <property type="protein sequence ID" value="AEE32305.1"/>
    <property type="molecule type" value="Genomic_DNA"/>
</dbReference>
<dbReference type="RefSeq" id="NP_175284.2">
    <molecule id="Q9LP74-1"/>
    <property type="nucleotide sequence ID" value="NM_103747.2"/>
</dbReference>
<dbReference type="BioGRID" id="26497">
    <property type="interactions" value="2"/>
</dbReference>
<dbReference type="FunCoup" id="Q9LP74">
    <property type="interactions" value="1788"/>
</dbReference>
<dbReference type="IntAct" id="Q9LP74">
    <property type="interactions" value="2"/>
</dbReference>
<dbReference type="STRING" id="3702.Q9LP74"/>
<dbReference type="PaxDb" id="3702-AT1G48510.1"/>
<dbReference type="ProteomicsDB" id="228404">
    <molecule id="Q9LP74-1"/>
</dbReference>
<dbReference type="EnsemblPlants" id="AT1G48510.1">
    <molecule id="Q9LP74-1"/>
    <property type="protein sequence ID" value="AT1G48510.1"/>
    <property type="gene ID" value="AT1G48510"/>
</dbReference>
<dbReference type="GeneID" id="841272"/>
<dbReference type="Gramene" id="AT1G48510.1">
    <molecule id="Q9LP74-1"/>
    <property type="protein sequence ID" value="AT1G48510.1"/>
    <property type="gene ID" value="AT1G48510"/>
</dbReference>
<dbReference type="KEGG" id="ath:AT1G48510"/>
<dbReference type="Araport" id="AT1G48510"/>
<dbReference type="TAIR" id="AT1G48510"/>
<dbReference type="eggNOG" id="KOG1563">
    <property type="taxonomic scope" value="Eukaryota"/>
</dbReference>
<dbReference type="HOGENOM" id="CLU_047737_1_0_1"/>
<dbReference type="InParanoid" id="Q9LP74"/>
<dbReference type="OMA" id="CILFFIC"/>
<dbReference type="PRO" id="PR:Q9LP74"/>
<dbReference type="Proteomes" id="UP000006548">
    <property type="component" value="Chromosome 1"/>
</dbReference>
<dbReference type="ExpressionAtlas" id="Q9LP74">
    <property type="expression patterns" value="baseline and differential"/>
</dbReference>
<dbReference type="GO" id="GO:0005743">
    <property type="term" value="C:mitochondrial inner membrane"/>
    <property type="evidence" value="ECO:0007669"/>
    <property type="project" value="UniProtKB-SubCell"/>
</dbReference>
<dbReference type="GO" id="GO:0005739">
    <property type="term" value="C:mitochondrion"/>
    <property type="evidence" value="ECO:0000314"/>
    <property type="project" value="TAIR"/>
</dbReference>
<dbReference type="GO" id="GO:0090351">
    <property type="term" value="P:seedling development"/>
    <property type="evidence" value="ECO:0000315"/>
    <property type="project" value="TAIR"/>
</dbReference>
<dbReference type="InterPro" id="IPR002994">
    <property type="entry name" value="Surf1/Shy1"/>
</dbReference>
<dbReference type="InterPro" id="IPR045214">
    <property type="entry name" value="Surf1/Surf4"/>
</dbReference>
<dbReference type="PANTHER" id="PTHR23427">
    <property type="entry name" value="SURFEIT LOCUS PROTEIN"/>
    <property type="match status" value="1"/>
</dbReference>
<dbReference type="PANTHER" id="PTHR23427:SF2">
    <property type="entry name" value="SURFEIT LOCUS PROTEIN 1"/>
    <property type="match status" value="1"/>
</dbReference>
<dbReference type="Pfam" id="PF02104">
    <property type="entry name" value="SURF1"/>
    <property type="match status" value="1"/>
</dbReference>
<dbReference type="PROSITE" id="PS50895">
    <property type="entry name" value="SURF1"/>
    <property type="match status" value="1"/>
</dbReference>
<accession>Q9LP74</accession>
<accession>F4HYG8</accession>
<protein>
    <recommendedName>
        <fullName>Surfeit locus protein 1-like</fullName>
        <shortName>Surfeit 1-like</shortName>
    </recommendedName>
    <alternativeName>
        <fullName>Cytochrome c oxidase assembly protein SURF1-like</fullName>
    </alternativeName>
</protein>
<organism>
    <name type="scientific">Arabidopsis thaliana</name>
    <name type="common">Mouse-ear cress</name>
    <dbReference type="NCBI Taxonomy" id="3702"/>
    <lineage>
        <taxon>Eukaryota</taxon>
        <taxon>Viridiplantae</taxon>
        <taxon>Streptophyta</taxon>
        <taxon>Embryophyta</taxon>
        <taxon>Tracheophyta</taxon>
        <taxon>Spermatophyta</taxon>
        <taxon>Magnoliopsida</taxon>
        <taxon>eudicotyledons</taxon>
        <taxon>Gunneridae</taxon>
        <taxon>Pentapetalae</taxon>
        <taxon>rosids</taxon>
        <taxon>malvids</taxon>
        <taxon>Brassicales</taxon>
        <taxon>Brassicaceae</taxon>
        <taxon>Camelineae</taxon>
        <taxon>Arabidopsis</taxon>
    </lineage>
</organism>
<reference key="1">
    <citation type="journal article" date="2000" name="Nature">
        <title>Sequence and analysis of chromosome 1 of the plant Arabidopsis thaliana.</title>
        <authorList>
            <person name="Theologis A."/>
            <person name="Ecker J.R."/>
            <person name="Palm C.J."/>
            <person name="Federspiel N.A."/>
            <person name="Kaul S."/>
            <person name="White O."/>
            <person name="Alonso J."/>
            <person name="Altafi H."/>
            <person name="Araujo R."/>
            <person name="Bowman C.L."/>
            <person name="Brooks S.Y."/>
            <person name="Buehler E."/>
            <person name="Chan A."/>
            <person name="Chao Q."/>
            <person name="Chen H."/>
            <person name="Cheuk R.F."/>
            <person name="Chin C.W."/>
            <person name="Chung M.K."/>
            <person name="Conn L."/>
            <person name="Conway A.B."/>
            <person name="Conway A.R."/>
            <person name="Creasy T.H."/>
            <person name="Dewar K."/>
            <person name="Dunn P."/>
            <person name="Etgu P."/>
            <person name="Feldblyum T.V."/>
            <person name="Feng J.-D."/>
            <person name="Fong B."/>
            <person name="Fujii C.Y."/>
            <person name="Gill J.E."/>
            <person name="Goldsmith A.D."/>
            <person name="Haas B."/>
            <person name="Hansen N.F."/>
            <person name="Hughes B."/>
            <person name="Huizar L."/>
            <person name="Hunter J.L."/>
            <person name="Jenkins J."/>
            <person name="Johnson-Hopson C."/>
            <person name="Khan S."/>
            <person name="Khaykin E."/>
            <person name="Kim C.J."/>
            <person name="Koo H.L."/>
            <person name="Kremenetskaia I."/>
            <person name="Kurtz D.B."/>
            <person name="Kwan A."/>
            <person name="Lam B."/>
            <person name="Langin-Hooper S."/>
            <person name="Lee A."/>
            <person name="Lee J.M."/>
            <person name="Lenz C.A."/>
            <person name="Li J.H."/>
            <person name="Li Y.-P."/>
            <person name="Lin X."/>
            <person name="Liu S.X."/>
            <person name="Liu Z.A."/>
            <person name="Luros J.S."/>
            <person name="Maiti R."/>
            <person name="Marziali A."/>
            <person name="Militscher J."/>
            <person name="Miranda M."/>
            <person name="Nguyen M."/>
            <person name="Nierman W.C."/>
            <person name="Osborne B.I."/>
            <person name="Pai G."/>
            <person name="Peterson J."/>
            <person name="Pham P.K."/>
            <person name="Rizzo M."/>
            <person name="Rooney T."/>
            <person name="Rowley D."/>
            <person name="Sakano H."/>
            <person name="Salzberg S.L."/>
            <person name="Schwartz J.R."/>
            <person name="Shinn P."/>
            <person name="Southwick A.M."/>
            <person name="Sun H."/>
            <person name="Tallon L.J."/>
            <person name="Tambunga G."/>
            <person name="Toriumi M.J."/>
            <person name="Town C.D."/>
            <person name="Utterback T."/>
            <person name="Van Aken S."/>
            <person name="Vaysberg M."/>
            <person name="Vysotskaia V.S."/>
            <person name="Walker M."/>
            <person name="Wu D."/>
            <person name="Yu G."/>
            <person name="Fraser C.M."/>
            <person name="Venter J.C."/>
            <person name="Davis R.W."/>
        </authorList>
    </citation>
    <scope>NUCLEOTIDE SEQUENCE [LARGE SCALE GENOMIC DNA]</scope>
    <source>
        <strain>cv. Columbia</strain>
    </source>
</reference>
<reference key="2">
    <citation type="journal article" date="2017" name="Plant J.">
        <title>Araport11: a complete reannotation of the Arabidopsis thaliana reference genome.</title>
        <authorList>
            <person name="Cheng C.Y."/>
            <person name="Krishnakumar V."/>
            <person name="Chan A.P."/>
            <person name="Thibaud-Nissen F."/>
            <person name="Schobel S."/>
            <person name="Town C.D."/>
        </authorList>
    </citation>
    <scope>GENOME REANNOTATION</scope>
    <source>
        <strain>cv. Columbia</strain>
    </source>
</reference>
<proteinExistence type="inferred from homology"/>
<keyword id="KW-0025">Alternative splicing</keyword>
<keyword id="KW-0472">Membrane</keyword>
<keyword id="KW-0496">Mitochondrion</keyword>
<keyword id="KW-0999">Mitochondrion inner membrane</keyword>
<keyword id="KW-1185">Reference proteome</keyword>
<keyword id="KW-0812">Transmembrane</keyword>
<keyword id="KW-1133">Transmembrane helix</keyword>
<comment type="function">
    <text evidence="1">May be involved in the biogenesis of the COX complex.</text>
</comment>
<comment type="subcellular location">
    <subcellularLocation>
        <location evidence="1">Mitochondrion inner membrane</location>
        <topology evidence="1">Multi-pass membrane protein</topology>
    </subcellularLocation>
</comment>
<comment type="alternative products">
    <event type="alternative splicing"/>
    <isoform>
        <id>Q9LP74-1</id>
        <name>1</name>
        <sequence type="displayed"/>
    </isoform>
    <text>A number of isoforms are produced. According to EST sequences.</text>
</comment>
<comment type="similarity">
    <text evidence="3">Belongs to the SURF1 (TC 3.D.4.8) family.</text>
</comment>
<comment type="sequence caution" evidence="3">
    <conflict type="erroneous gene model prediction">
        <sequence resource="EMBL-CDS" id="AAF79698"/>
    </conflict>
</comment>
<feature type="chain" id="PRO_0000412565" description="Surfeit locus protein 1-like">
    <location>
        <begin position="1"/>
        <end position="384"/>
    </location>
</feature>
<feature type="transmembrane region" description="Helical" evidence="2">
    <location>
        <begin position="55"/>
        <end position="75"/>
    </location>
</feature>
<feature type="transmembrane region" description="Helical" evidence="2">
    <location>
        <begin position="302"/>
        <end position="322"/>
    </location>
</feature>
<feature type="transmembrane region" description="Helical" evidence="2">
    <location>
        <begin position="338"/>
        <end position="358"/>
    </location>
</feature>
<evidence type="ECO:0000250" key="1"/>
<evidence type="ECO:0000255" key="2"/>
<evidence type="ECO:0000305" key="3"/>
<gene>
    <name type="ordered locus">At1g48510</name>
    <name type="ORF">T1N15.12</name>
</gene>